<feature type="chain" id="PRO_0000209161" description="Protein Smg homolog">
    <location>
        <begin position="1"/>
        <end position="152"/>
    </location>
</feature>
<reference key="1">
    <citation type="journal article" date="2003" name="Nat. Genet.">
        <title>Comparative analysis of the genome sequences of Bordetella pertussis, Bordetella parapertussis and Bordetella bronchiseptica.</title>
        <authorList>
            <person name="Parkhill J."/>
            <person name="Sebaihia M."/>
            <person name="Preston A."/>
            <person name="Murphy L.D."/>
            <person name="Thomson N.R."/>
            <person name="Harris D.E."/>
            <person name="Holden M.T.G."/>
            <person name="Churcher C.M."/>
            <person name="Bentley S.D."/>
            <person name="Mungall K.L."/>
            <person name="Cerdeno-Tarraga A.-M."/>
            <person name="Temple L."/>
            <person name="James K.D."/>
            <person name="Harris B."/>
            <person name="Quail M.A."/>
            <person name="Achtman M."/>
            <person name="Atkin R."/>
            <person name="Baker S."/>
            <person name="Basham D."/>
            <person name="Bason N."/>
            <person name="Cherevach I."/>
            <person name="Chillingworth T."/>
            <person name="Collins M."/>
            <person name="Cronin A."/>
            <person name="Davis P."/>
            <person name="Doggett J."/>
            <person name="Feltwell T."/>
            <person name="Goble A."/>
            <person name="Hamlin N."/>
            <person name="Hauser H."/>
            <person name="Holroyd S."/>
            <person name="Jagels K."/>
            <person name="Leather S."/>
            <person name="Moule S."/>
            <person name="Norberczak H."/>
            <person name="O'Neil S."/>
            <person name="Ormond D."/>
            <person name="Price C."/>
            <person name="Rabbinowitsch E."/>
            <person name="Rutter S."/>
            <person name="Sanders M."/>
            <person name="Saunders D."/>
            <person name="Seeger K."/>
            <person name="Sharp S."/>
            <person name="Simmonds M."/>
            <person name="Skelton J."/>
            <person name="Squares R."/>
            <person name="Squares S."/>
            <person name="Stevens K."/>
            <person name="Unwin L."/>
            <person name="Whitehead S."/>
            <person name="Barrell B.G."/>
            <person name="Maskell D.J."/>
        </authorList>
    </citation>
    <scope>NUCLEOTIDE SEQUENCE [LARGE SCALE GENOMIC DNA]</scope>
    <source>
        <strain>ATCC BAA-588 / NCTC 13252 / RB50</strain>
    </source>
</reference>
<organism>
    <name type="scientific">Bordetella bronchiseptica (strain ATCC BAA-588 / NCTC 13252 / RB50)</name>
    <name type="common">Alcaligenes bronchisepticus</name>
    <dbReference type="NCBI Taxonomy" id="257310"/>
    <lineage>
        <taxon>Bacteria</taxon>
        <taxon>Pseudomonadati</taxon>
        <taxon>Pseudomonadota</taxon>
        <taxon>Betaproteobacteria</taxon>
        <taxon>Burkholderiales</taxon>
        <taxon>Alcaligenaceae</taxon>
        <taxon>Bordetella</taxon>
    </lineage>
</organism>
<name>SMG_BORBR</name>
<sequence length="152" mass="16867">MFDILVYLFENYYTPQACPAADVLAKRLAAAGFEHEDIDDALGWLYGLAETTERCVELAHAPATGIRIYTDAEYQQLGTESIGFITFLESAGVLPAPLREIVIDRALASPETPISLSKIKIIALMVLWSQEAEIDNLVLEELLDDEGSRRLH</sequence>
<gene>
    <name evidence="1" type="primary">smg</name>
    <name type="ordered locus">BB4957</name>
</gene>
<protein>
    <recommendedName>
        <fullName evidence="1">Protein Smg homolog</fullName>
    </recommendedName>
</protein>
<evidence type="ECO:0000255" key="1">
    <source>
        <dbReference type="HAMAP-Rule" id="MF_00598"/>
    </source>
</evidence>
<comment type="similarity">
    <text evidence="1">Belongs to the Smg family.</text>
</comment>
<dbReference type="EMBL" id="BX640452">
    <property type="protein sequence ID" value="CAE35321.1"/>
    <property type="molecule type" value="Genomic_DNA"/>
</dbReference>
<dbReference type="RefSeq" id="WP_003815964.1">
    <property type="nucleotide sequence ID" value="NC_002927.3"/>
</dbReference>
<dbReference type="SMR" id="Q7WDN1"/>
<dbReference type="KEGG" id="bbr:BB4957"/>
<dbReference type="eggNOG" id="COG2922">
    <property type="taxonomic scope" value="Bacteria"/>
</dbReference>
<dbReference type="HOGENOM" id="CLU_133242_0_0_4"/>
<dbReference type="Proteomes" id="UP000001027">
    <property type="component" value="Chromosome"/>
</dbReference>
<dbReference type="HAMAP" id="MF_00598">
    <property type="entry name" value="Smg"/>
    <property type="match status" value="1"/>
</dbReference>
<dbReference type="InterPro" id="IPR007456">
    <property type="entry name" value="Smg"/>
</dbReference>
<dbReference type="PANTHER" id="PTHR38692">
    <property type="entry name" value="PROTEIN SMG"/>
    <property type="match status" value="1"/>
</dbReference>
<dbReference type="PANTHER" id="PTHR38692:SF1">
    <property type="entry name" value="PROTEIN SMG"/>
    <property type="match status" value="1"/>
</dbReference>
<dbReference type="Pfam" id="PF04361">
    <property type="entry name" value="DUF494"/>
    <property type="match status" value="1"/>
</dbReference>
<proteinExistence type="inferred from homology"/>
<accession>Q7WDN1</accession>